<protein>
    <recommendedName>
        <fullName evidence="1">Transcription antitermination protein NusB</fullName>
    </recommendedName>
    <alternativeName>
        <fullName evidence="1">Antitermination factor NusB</fullName>
    </alternativeName>
</protein>
<dbReference type="EMBL" id="FM204884">
    <property type="protein sequence ID" value="CAX00364.1"/>
    <property type="molecule type" value="Genomic_DNA"/>
</dbReference>
<dbReference type="SMR" id="C0MED0"/>
<dbReference type="KEGG" id="seq:SZO_16220"/>
<dbReference type="eggNOG" id="COG0781">
    <property type="taxonomic scope" value="Bacteria"/>
</dbReference>
<dbReference type="HOGENOM" id="CLU_087843_3_2_9"/>
<dbReference type="Proteomes" id="UP000001368">
    <property type="component" value="Chromosome"/>
</dbReference>
<dbReference type="GO" id="GO:0005829">
    <property type="term" value="C:cytosol"/>
    <property type="evidence" value="ECO:0007669"/>
    <property type="project" value="TreeGrafter"/>
</dbReference>
<dbReference type="GO" id="GO:0003723">
    <property type="term" value="F:RNA binding"/>
    <property type="evidence" value="ECO:0007669"/>
    <property type="project" value="UniProtKB-UniRule"/>
</dbReference>
<dbReference type="GO" id="GO:0006353">
    <property type="term" value="P:DNA-templated transcription termination"/>
    <property type="evidence" value="ECO:0007669"/>
    <property type="project" value="UniProtKB-UniRule"/>
</dbReference>
<dbReference type="GO" id="GO:0031564">
    <property type="term" value="P:transcription antitermination"/>
    <property type="evidence" value="ECO:0007669"/>
    <property type="project" value="UniProtKB-KW"/>
</dbReference>
<dbReference type="Gene3D" id="1.10.940.10">
    <property type="entry name" value="NusB-like"/>
    <property type="match status" value="1"/>
</dbReference>
<dbReference type="HAMAP" id="MF_00073">
    <property type="entry name" value="NusB"/>
    <property type="match status" value="1"/>
</dbReference>
<dbReference type="InterPro" id="IPR035926">
    <property type="entry name" value="NusB-like_sf"/>
</dbReference>
<dbReference type="InterPro" id="IPR011605">
    <property type="entry name" value="NusB_fam"/>
</dbReference>
<dbReference type="InterPro" id="IPR006027">
    <property type="entry name" value="NusB_RsmB_TIM44"/>
</dbReference>
<dbReference type="NCBIfam" id="TIGR01951">
    <property type="entry name" value="nusB"/>
    <property type="match status" value="1"/>
</dbReference>
<dbReference type="NCBIfam" id="NF001223">
    <property type="entry name" value="PRK00202.1-1"/>
    <property type="match status" value="1"/>
</dbReference>
<dbReference type="PANTHER" id="PTHR11078:SF3">
    <property type="entry name" value="ANTITERMINATION NUSB DOMAIN-CONTAINING PROTEIN"/>
    <property type="match status" value="1"/>
</dbReference>
<dbReference type="PANTHER" id="PTHR11078">
    <property type="entry name" value="N UTILIZATION SUBSTANCE PROTEIN B-RELATED"/>
    <property type="match status" value="1"/>
</dbReference>
<dbReference type="Pfam" id="PF01029">
    <property type="entry name" value="NusB"/>
    <property type="match status" value="1"/>
</dbReference>
<dbReference type="SUPFAM" id="SSF48013">
    <property type="entry name" value="NusB-like"/>
    <property type="match status" value="1"/>
</dbReference>
<accession>C0MED0</accession>
<name>NUSB_STRS7</name>
<comment type="function">
    <text evidence="1">Involved in transcription antitermination. Required for transcription of ribosomal RNA (rRNA) genes. Binds specifically to the boxA antiterminator sequence of the ribosomal RNA (rrn) operons.</text>
</comment>
<comment type="similarity">
    <text evidence="1">Belongs to the NusB family.</text>
</comment>
<evidence type="ECO:0000255" key="1">
    <source>
        <dbReference type="HAMAP-Rule" id="MF_00073"/>
    </source>
</evidence>
<organism>
    <name type="scientific">Streptococcus equi subsp. zooepidemicus (strain H70)</name>
    <dbReference type="NCBI Taxonomy" id="553483"/>
    <lineage>
        <taxon>Bacteria</taxon>
        <taxon>Bacillati</taxon>
        <taxon>Bacillota</taxon>
        <taxon>Bacilli</taxon>
        <taxon>Lactobacillales</taxon>
        <taxon>Streptococcaceae</taxon>
        <taxon>Streptococcus</taxon>
    </lineage>
</organism>
<feature type="chain" id="PRO_1000202491" description="Transcription antitermination protein NusB">
    <location>
        <begin position="1"/>
        <end position="150"/>
    </location>
</feature>
<gene>
    <name evidence="1" type="primary">nusB</name>
    <name type="ordered locus">SZO_16220</name>
</gene>
<keyword id="KW-0694">RNA-binding</keyword>
<keyword id="KW-0804">Transcription</keyword>
<keyword id="KW-0889">Transcription antitermination</keyword>
<keyword id="KW-0805">Transcription regulation</keyword>
<reference key="1">
    <citation type="journal article" date="2009" name="PLoS Pathog.">
        <title>Genomic evidence for the evolution of Streptococcus equi: host restriction, increased virulence, and genetic exchange with human pathogens.</title>
        <authorList>
            <person name="Holden M.T.G."/>
            <person name="Heather Z."/>
            <person name="Paillot R."/>
            <person name="Steward K.F."/>
            <person name="Webb K."/>
            <person name="Ainslie F."/>
            <person name="Jourdan T."/>
            <person name="Bason N.C."/>
            <person name="Holroyd N.E."/>
            <person name="Mungall K."/>
            <person name="Quail M.A."/>
            <person name="Sanders M."/>
            <person name="Simmonds M."/>
            <person name="Willey D."/>
            <person name="Brooks K."/>
            <person name="Aanensen D.M."/>
            <person name="Spratt B.G."/>
            <person name="Jolley K.A."/>
            <person name="Maiden M.C.J."/>
            <person name="Kehoe M."/>
            <person name="Chanter N."/>
            <person name="Bentley S.D."/>
            <person name="Robinson C."/>
            <person name="Maskell D.J."/>
            <person name="Parkhill J."/>
            <person name="Waller A.S."/>
        </authorList>
    </citation>
    <scope>NUCLEOTIDE SEQUENCE [LARGE SCALE GENOMIC DNA]</scope>
    <source>
        <strain>H70</strain>
    </source>
</reference>
<proteinExistence type="inferred from homology"/>
<sequence>MTKRFQHSRRDLRERAFQALFTMEMGGDFLLASQFAYDYDKEVADDKQPSELPVFLLNLVNGVMDHKAELDEVIKKNLKAGWSIERLTVVDKTMLRLGLFEMTLFEETPDRVALNEIIEIAKKYSDDTSAKFINGLLSQFVSDESAAVTD</sequence>